<feature type="signal peptide">
    <location>
        <begin position="1"/>
        <end position="19"/>
    </location>
</feature>
<feature type="chain" id="PRO_0000032767" description="Epiphycan">
    <location>
        <begin position="20"/>
        <end position="321"/>
    </location>
</feature>
<feature type="domain" description="LRRNT">
    <location>
        <begin position="105"/>
        <end position="142"/>
    </location>
</feature>
<feature type="repeat" description="LRR 1">
    <location>
        <begin position="143"/>
        <end position="164"/>
    </location>
</feature>
<feature type="repeat" description="LRR 2">
    <location>
        <begin position="167"/>
        <end position="188"/>
    </location>
</feature>
<feature type="repeat" description="LRR 3">
    <location>
        <begin position="191"/>
        <end position="212"/>
    </location>
</feature>
<feature type="repeat" description="LRR 4">
    <location>
        <begin position="237"/>
        <end position="257"/>
    </location>
</feature>
<feature type="repeat" description="LRR 5">
    <location>
        <begin position="258"/>
        <end position="279"/>
    </location>
</feature>
<feature type="repeat" description="LRR 6">
    <location>
        <begin position="289"/>
        <end position="309"/>
    </location>
</feature>
<feature type="region of interest" description="Disordered" evidence="2">
    <location>
        <begin position="64"/>
        <end position="100"/>
    </location>
</feature>
<feature type="compositionally biased region" description="Acidic residues" evidence="2">
    <location>
        <begin position="77"/>
        <end position="86"/>
    </location>
</feature>
<feature type="site" description="Not glycosylated">
    <location>
        <position position="301"/>
    </location>
</feature>
<feature type="glycosylation site" description="O-linked (GalNAc...) threonine" evidence="3">
    <location>
        <position position="60"/>
    </location>
</feature>
<feature type="glycosylation site" description="O-linked (Xyl...) (dermatan sulfate) serine" evidence="5">
    <location>
        <position position="64"/>
    </location>
</feature>
<feature type="glycosylation site" description="O-linked (GalNAc...) serine" evidence="3">
    <location>
        <position position="95"/>
    </location>
</feature>
<feature type="glycosylation site" description="N-linked (GlcNAc...) asparagine" evidence="5">
    <location>
        <position position="282"/>
    </location>
</feature>
<feature type="disulfide bond" evidence="1">
    <location>
        <begin position="117"/>
        <end position="129"/>
    </location>
</feature>
<feature type="disulfide bond" evidence="3">
    <location>
        <begin position="278"/>
        <end position="311"/>
    </location>
</feature>
<protein>
    <recommendedName>
        <fullName>Epiphycan</fullName>
    </recommendedName>
    <alternativeName>
        <fullName>Dermatan sulfate proteoglycan 3</fullName>
    </alternativeName>
    <alternativeName>
        <fullName>Proteoglycan-Lb</fullName>
        <shortName>PG-Lb</shortName>
    </alternativeName>
    <alternativeName>
        <fullName>Small chondroitin/dermatan sulfate proteoglycan</fullName>
    </alternativeName>
</protein>
<evidence type="ECO:0000250" key="1"/>
<evidence type="ECO:0000256" key="2">
    <source>
        <dbReference type="SAM" id="MobiDB-lite"/>
    </source>
</evidence>
<evidence type="ECO:0000269" key="3">
    <source>
    </source>
</evidence>
<evidence type="ECO:0000305" key="4"/>
<evidence type="ECO:0000305" key="5">
    <source>
    </source>
</evidence>
<accession>P79119</accession>
<dbReference type="EMBL" id="U77127">
    <property type="protein sequence ID" value="AAB68397.1"/>
    <property type="molecule type" value="mRNA"/>
</dbReference>
<dbReference type="RefSeq" id="NP_776732.1">
    <property type="nucleotide sequence ID" value="NM_174307.2"/>
</dbReference>
<dbReference type="RefSeq" id="XP_010803061.1">
    <property type="nucleotide sequence ID" value="XM_010804759.4"/>
</dbReference>
<dbReference type="SMR" id="P79119"/>
<dbReference type="FunCoup" id="P79119">
    <property type="interactions" value="217"/>
</dbReference>
<dbReference type="IntAct" id="P79119">
    <property type="interactions" value="1"/>
</dbReference>
<dbReference type="STRING" id="9913.ENSBTAP00000010504"/>
<dbReference type="GlyCosmos" id="P79119">
    <property type="glycosylation" value="4 sites, No reported glycans"/>
</dbReference>
<dbReference type="GlyGen" id="P79119">
    <property type="glycosylation" value="4 sites"/>
</dbReference>
<dbReference type="iPTMnet" id="P79119"/>
<dbReference type="PaxDb" id="9913-ENSBTAP00000010504"/>
<dbReference type="Ensembl" id="ENSBTAT00000010504.5">
    <property type="protein sequence ID" value="ENSBTAP00000010504.3"/>
    <property type="gene ID" value="ENSBTAG00000007990.5"/>
</dbReference>
<dbReference type="GeneID" id="281747"/>
<dbReference type="KEGG" id="bta:281747"/>
<dbReference type="CTD" id="1833"/>
<dbReference type="VEuPathDB" id="HostDB:ENSBTAG00000007990"/>
<dbReference type="VGNC" id="VGNC:28558">
    <property type="gene designation" value="EPYC"/>
</dbReference>
<dbReference type="eggNOG" id="KOG0619">
    <property type="taxonomic scope" value="Eukaryota"/>
</dbReference>
<dbReference type="GeneTree" id="ENSGT00940000157574"/>
<dbReference type="HOGENOM" id="CLU_067583_0_0_1"/>
<dbReference type="InParanoid" id="P79119"/>
<dbReference type="OMA" id="EFYDIPL"/>
<dbReference type="OrthoDB" id="676979at2759"/>
<dbReference type="TreeFam" id="TF351924"/>
<dbReference type="Proteomes" id="UP000009136">
    <property type="component" value="Chromosome 5"/>
</dbReference>
<dbReference type="Bgee" id="ENSBTAG00000007990">
    <property type="expression patterns" value="Expressed in cardiac atrium and 30 other cell types or tissues"/>
</dbReference>
<dbReference type="GO" id="GO:0031012">
    <property type="term" value="C:extracellular matrix"/>
    <property type="evidence" value="ECO:0000318"/>
    <property type="project" value="GO_Central"/>
</dbReference>
<dbReference type="GO" id="GO:0005576">
    <property type="term" value="C:extracellular region"/>
    <property type="evidence" value="ECO:0007669"/>
    <property type="project" value="UniProtKB-KW"/>
</dbReference>
<dbReference type="GO" id="GO:0061975">
    <property type="term" value="P:articular cartilage development"/>
    <property type="evidence" value="ECO:0000318"/>
    <property type="project" value="GO_Central"/>
</dbReference>
<dbReference type="GO" id="GO:0060348">
    <property type="term" value="P:bone development"/>
    <property type="evidence" value="ECO:0000318"/>
    <property type="project" value="GO_Central"/>
</dbReference>
<dbReference type="GO" id="GO:0007605">
    <property type="term" value="P:sensory perception of sound"/>
    <property type="evidence" value="ECO:0007669"/>
    <property type="project" value="Ensembl"/>
</dbReference>
<dbReference type="FunFam" id="3.80.10.10:FF:000167">
    <property type="entry name" value="epiphycan"/>
    <property type="match status" value="1"/>
</dbReference>
<dbReference type="Gene3D" id="3.80.10.10">
    <property type="entry name" value="Ribonuclease Inhibitor"/>
    <property type="match status" value="1"/>
</dbReference>
<dbReference type="InterPro" id="IPR001611">
    <property type="entry name" value="Leu-rich_rpt"/>
</dbReference>
<dbReference type="InterPro" id="IPR003591">
    <property type="entry name" value="Leu-rich_rpt_typical-subtyp"/>
</dbReference>
<dbReference type="InterPro" id="IPR032675">
    <property type="entry name" value="LRR_dom_sf"/>
</dbReference>
<dbReference type="InterPro" id="IPR000372">
    <property type="entry name" value="LRRNT"/>
</dbReference>
<dbReference type="InterPro" id="IPR043547">
    <property type="entry name" value="Mimecan/Epiphycan/Opticin"/>
</dbReference>
<dbReference type="PANTHER" id="PTHR46269:SF3">
    <property type="entry name" value="EPIPHYCAN"/>
    <property type="match status" value="1"/>
</dbReference>
<dbReference type="PANTHER" id="PTHR46269">
    <property type="entry name" value="EPIPHYCAN-RELATED"/>
    <property type="match status" value="1"/>
</dbReference>
<dbReference type="Pfam" id="PF00560">
    <property type="entry name" value="LRR_1"/>
    <property type="match status" value="1"/>
</dbReference>
<dbReference type="Pfam" id="PF13855">
    <property type="entry name" value="LRR_8"/>
    <property type="match status" value="1"/>
</dbReference>
<dbReference type="Pfam" id="PF01462">
    <property type="entry name" value="LRRNT"/>
    <property type="match status" value="1"/>
</dbReference>
<dbReference type="SMART" id="SM00369">
    <property type="entry name" value="LRR_TYP"/>
    <property type="match status" value="4"/>
</dbReference>
<dbReference type="SMART" id="SM00013">
    <property type="entry name" value="LRRNT"/>
    <property type="match status" value="1"/>
</dbReference>
<dbReference type="SUPFAM" id="SSF52058">
    <property type="entry name" value="L domain-like"/>
    <property type="match status" value="1"/>
</dbReference>
<dbReference type="PROSITE" id="PS51450">
    <property type="entry name" value="LRR"/>
    <property type="match status" value="4"/>
</dbReference>
<sequence>MKALARLIVGLLILDAAVTAPTLESINYNSETYDATLEDLDHLYNYENIPMGRAEIEIATVMPSGNRELLTPPPQPEEAEEEEEEESTPRLIDGSSPQEPEFTGVLGPQTNEDFPTCLLCTCISTTVYCDDHELDAIPPLPKNTAYFYSRFNRIKKINKNDFASLNDLRRIDLTSNLISEIDEDAFRKLPQLRELVLRDNKIRQLPELPTTLRFIDISNNRLGRKGIKQEAFKDMYDLHHLYLTDNNLDHIPLPLPENLRALHLQNNNIMEMHEDTFCNVKNLTYIRKALEDIRLDGNPINLSKTPQAYMCLPRLPIGSLV</sequence>
<name>EPYC_BOVIN</name>
<keyword id="KW-0903">Direct protein sequencing</keyword>
<keyword id="KW-1015">Disulfide bond</keyword>
<keyword id="KW-0272">Extracellular matrix</keyword>
<keyword id="KW-0325">Glycoprotein</keyword>
<keyword id="KW-0433">Leucine-rich repeat</keyword>
<keyword id="KW-0654">Proteoglycan</keyword>
<keyword id="KW-1185">Reference proteome</keyword>
<keyword id="KW-0677">Repeat</keyword>
<keyword id="KW-0964">Secreted</keyword>
<keyword id="KW-0732">Signal</keyword>
<gene>
    <name type="primary">EPYC</name>
    <name type="synonym">DSPG3</name>
    <name type="synonym">PGLB</name>
</gene>
<comment type="function">
    <text>May have a role in bone formation and also in establishing the ordered structure of cartilage through matrix organization.</text>
</comment>
<comment type="subcellular location">
    <subcellularLocation>
        <location evidence="1">Secreted</location>
        <location evidence="1">Extracellular space</location>
        <location evidence="1">Extracellular matrix</location>
    </subcellularLocation>
</comment>
<comment type="tissue specificity">
    <text evidence="3">Preferentially expressed in the zone of flattened chondrocytes of the developing limb cartilage.</text>
</comment>
<comment type="developmental stage">
    <text>Embryo.</text>
</comment>
<comment type="PTM">
    <text>A long and a short form present in approximately equimolar amounts may arise by proteolysis or cleavage by exopeptidases.</text>
</comment>
<comment type="PTM">
    <text evidence="3">The O-linked polysaccharides on Thr-60 and Ser-95 are probably the mucin type linked to GalNAc. There is one glycosaminoglycan chain, known to be dermatan sulfate, and it is probably the O-glycosylation at Ser-64.</text>
</comment>
<comment type="similarity">
    <text evidence="4">Belongs to the small leucine-rich proteoglycan (SLRP) family. SLRP class III subfamily.</text>
</comment>
<reference key="1">
    <citation type="journal article" date="1997" name="J. Biol. Chem.">
        <title>Characterization of epiphycan, a small proteoglycan with a leucine-rich repeat core protein.</title>
        <authorList>
            <person name="Johnson H.J."/>
            <person name="Rosenberg L."/>
            <person name="Choi H.U."/>
            <person name="Garza S."/>
            <person name="Hoeoek M."/>
            <person name="Neame P.J."/>
        </authorList>
    </citation>
    <scope>NUCLEOTIDE SEQUENCE [MRNA]</scope>
    <scope>PARTIAL PROTEIN SEQUENCE</scope>
    <scope>GLYCOSYLATION AT THR-60; SER-64; SER-95 AND ASN-282</scope>
    <scope>TISSUE SPECIFICITY</scope>
    <scope>DISULFIDE BOND</scope>
    <source>
        <tissue>Fetal epiphyseal cartilage</tissue>
    </source>
</reference>
<organism>
    <name type="scientific">Bos taurus</name>
    <name type="common">Bovine</name>
    <dbReference type="NCBI Taxonomy" id="9913"/>
    <lineage>
        <taxon>Eukaryota</taxon>
        <taxon>Metazoa</taxon>
        <taxon>Chordata</taxon>
        <taxon>Craniata</taxon>
        <taxon>Vertebrata</taxon>
        <taxon>Euteleostomi</taxon>
        <taxon>Mammalia</taxon>
        <taxon>Eutheria</taxon>
        <taxon>Laurasiatheria</taxon>
        <taxon>Artiodactyla</taxon>
        <taxon>Ruminantia</taxon>
        <taxon>Pecora</taxon>
        <taxon>Bovidae</taxon>
        <taxon>Bovinae</taxon>
        <taxon>Bos</taxon>
    </lineage>
</organism>
<proteinExistence type="evidence at protein level"/>